<accession>Q292N4</accession>
<dbReference type="EMBL" id="CM000071">
    <property type="protein sequence ID" value="EAL24828.2"/>
    <property type="molecule type" value="Genomic_DNA"/>
</dbReference>
<dbReference type="SMR" id="Q292N4"/>
<dbReference type="FunCoup" id="Q292N4">
    <property type="interactions" value="578"/>
</dbReference>
<dbReference type="STRING" id="46245.Q292N4"/>
<dbReference type="GlyCosmos" id="Q292N4">
    <property type="glycosylation" value="8 sites, No reported glycans"/>
</dbReference>
<dbReference type="eggNOG" id="KOG4193">
    <property type="taxonomic scope" value="Eukaryota"/>
</dbReference>
<dbReference type="eggNOG" id="KOG4729">
    <property type="taxonomic scope" value="Eukaryota"/>
</dbReference>
<dbReference type="HOGENOM" id="CLU_003272_0_0_1"/>
<dbReference type="InParanoid" id="Q292N4"/>
<dbReference type="OMA" id="NMRVFIY"/>
<dbReference type="ChiTaRS" id="Cirl">
    <property type="organism name" value="fly"/>
</dbReference>
<dbReference type="Proteomes" id="UP000001819">
    <property type="component" value="Unplaced"/>
</dbReference>
<dbReference type="GO" id="GO:0005886">
    <property type="term" value="C:plasma membrane"/>
    <property type="evidence" value="ECO:0007669"/>
    <property type="project" value="UniProtKB-SubCell"/>
</dbReference>
<dbReference type="GO" id="GO:0030246">
    <property type="term" value="F:carbohydrate binding"/>
    <property type="evidence" value="ECO:0007669"/>
    <property type="project" value="UniProtKB-KW"/>
</dbReference>
<dbReference type="GO" id="GO:0004930">
    <property type="term" value="F:G protein-coupled receptor activity"/>
    <property type="evidence" value="ECO:0007669"/>
    <property type="project" value="UniProtKB-KW"/>
</dbReference>
<dbReference type="GO" id="GO:0007166">
    <property type="term" value="P:cell surface receptor signaling pathway"/>
    <property type="evidence" value="ECO:0007669"/>
    <property type="project" value="InterPro"/>
</dbReference>
<dbReference type="CDD" id="cd22830">
    <property type="entry name" value="Gal_Rha_Lectin_dCirl"/>
    <property type="match status" value="1"/>
</dbReference>
<dbReference type="FunFam" id="2.60.120.740:FF:000001">
    <property type="entry name" value="Adhesion G protein-coupled receptor L2"/>
    <property type="match status" value="1"/>
</dbReference>
<dbReference type="FunFam" id="1.20.1070.10:FF:000322">
    <property type="entry name" value="latrophilin Cirl isoform X2"/>
    <property type="match status" value="1"/>
</dbReference>
<dbReference type="FunFam" id="1.25.40.610:FF:000006">
    <property type="entry name" value="latrophilin Cirl isoform X2"/>
    <property type="match status" value="1"/>
</dbReference>
<dbReference type="FunFam" id="2.60.220.50:FF:000024">
    <property type="entry name" value="latrophilin Cirl isoform X2"/>
    <property type="match status" value="1"/>
</dbReference>
<dbReference type="Gene3D" id="1.25.40.610">
    <property type="match status" value="1"/>
</dbReference>
<dbReference type="Gene3D" id="2.60.120.740">
    <property type="match status" value="1"/>
</dbReference>
<dbReference type="Gene3D" id="2.60.220.50">
    <property type="match status" value="1"/>
</dbReference>
<dbReference type="Gene3D" id="4.10.1240.10">
    <property type="entry name" value="GPCR, family 2, extracellular hormone receptor domain"/>
    <property type="match status" value="1"/>
</dbReference>
<dbReference type="Gene3D" id="1.20.1070.10">
    <property type="entry name" value="Rhodopsin 7-helix transmembrane proteins"/>
    <property type="match status" value="1"/>
</dbReference>
<dbReference type="InterPro" id="IPR057244">
    <property type="entry name" value="GAIN_B"/>
</dbReference>
<dbReference type="InterPro" id="IPR032471">
    <property type="entry name" value="GAIN_dom_N"/>
</dbReference>
<dbReference type="InterPro" id="IPR046338">
    <property type="entry name" value="GAIN_dom_sf"/>
</dbReference>
<dbReference type="InterPro" id="IPR017981">
    <property type="entry name" value="GPCR_2-like_7TM"/>
</dbReference>
<dbReference type="InterPro" id="IPR036445">
    <property type="entry name" value="GPCR_2_extracell_dom_sf"/>
</dbReference>
<dbReference type="InterPro" id="IPR000832">
    <property type="entry name" value="GPCR_2_secretin-like"/>
</dbReference>
<dbReference type="InterPro" id="IPR000203">
    <property type="entry name" value="GPS"/>
</dbReference>
<dbReference type="InterPro" id="IPR000922">
    <property type="entry name" value="Lectin_gal-bd_dom"/>
</dbReference>
<dbReference type="InterPro" id="IPR043159">
    <property type="entry name" value="Lectin_gal-bd_sf"/>
</dbReference>
<dbReference type="PANTHER" id="PTHR12011">
    <property type="entry name" value="ADHESION G-PROTEIN COUPLED RECEPTOR"/>
    <property type="match status" value="1"/>
</dbReference>
<dbReference type="PANTHER" id="PTHR12011:SF475">
    <property type="entry name" value="LATROPHILIN CIRL"/>
    <property type="match status" value="1"/>
</dbReference>
<dbReference type="Pfam" id="PF00002">
    <property type="entry name" value="7tm_2"/>
    <property type="match status" value="1"/>
</dbReference>
<dbReference type="Pfam" id="PF16489">
    <property type="entry name" value="GAIN"/>
    <property type="match status" value="1"/>
</dbReference>
<dbReference type="Pfam" id="PF01825">
    <property type="entry name" value="GPS"/>
    <property type="match status" value="1"/>
</dbReference>
<dbReference type="Pfam" id="PF02140">
    <property type="entry name" value="SUEL_Lectin"/>
    <property type="match status" value="1"/>
</dbReference>
<dbReference type="SMART" id="SM00303">
    <property type="entry name" value="GPS"/>
    <property type="match status" value="1"/>
</dbReference>
<dbReference type="SUPFAM" id="SSF81321">
    <property type="entry name" value="Family A G protein-coupled receptor-like"/>
    <property type="match status" value="1"/>
</dbReference>
<dbReference type="PROSITE" id="PS50261">
    <property type="entry name" value="G_PROTEIN_RECEP_F2_4"/>
    <property type="match status" value="1"/>
</dbReference>
<dbReference type="PROSITE" id="PS50221">
    <property type="entry name" value="GAIN_B"/>
    <property type="match status" value="1"/>
</dbReference>
<dbReference type="PROSITE" id="PS50228">
    <property type="entry name" value="SUEL_LECTIN"/>
    <property type="match status" value="1"/>
</dbReference>
<reference evidence="7" key="1">
    <citation type="journal article" date="2005" name="Genome Res.">
        <title>Comparative genome sequencing of Drosophila pseudoobscura: chromosomal, gene, and cis-element evolution.</title>
        <authorList>
            <person name="Richards S."/>
            <person name="Liu Y."/>
            <person name="Bettencourt B.R."/>
            <person name="Hradecky P."/>
            <person name="Letovsky S."/>
            <person name="Nielsen R."/>
            <person name="Thornton K."/>
            <person name="Hubisz M.J."/>
            <person name="Chen R."/>
            <person name="Meisel R.P."/>
            <person name="Couronne O."/>
            <person name="Hua S."/>
            <person name="Smith M.A."/>
            <person name="Zhang P."/>
            <person name="Liu J."/>
            <person name="Bussemaker H.J."/>
            <person name="van Batenburg M.F."/>
            <person name="Howells S.L."/>
            <person name="Scherer S.E."/>
            <person name="Sodergren E."/>
            <person name="Matthews B.B."/>
            <person name="Crosby M.A."/>
            <person name="Schroeder A.J."/>
            <person name="Ortiz-Barrientos D."/>
            <person name="Rives C.M."/>
            <person name="Metzker M.L."/>
            <person name="Muzny D.M."/>
            <person name="Scott G."/>
            <person name="Steffen D."/>
            <person name="Wheeler D.A."/>
            <person name="Worley K.C."/>
            <person name="Havlak P."/>
            <person name="Durbin K.J."/>
            <person name="Egan A."/>
            <person name="Gill R."/>
            <person name="Hume J."/>
            <person name="Morgan M.B."/>
            <person name="Miner G."/>
            <person name="Hamilton C."/>
            <person name="Huang Y."/>
            <person name="Waldron L."/>
            <person name="Verduzco D."/>
            <person name="Clerc-Blankenburg K.P."/>
            <person name="Dubchak I."/>
            <person name="Noor M.A.F."/>
            <person name="Anderson W."/>
            <person name="White K.P."/>
            <person name="Clark A.G."/>
            <person name="Schaeffer S.W."/>
            <person name="Gelbart W.M."/>
            <person name="Weinstock G.M."/>
            <person name="Gibbs R.A."/>
        </authorList>
    </citation>
    <scope>NUCLEOTIDE SEQUENCE [LARGE SCALE GENOMIC DNA]</scope>
    <source>
        <strain>MV2-25 / Tucson 14011-0121.94</strain>
    </source>
</reference>
<comment type="subunit">
    <text evidence="2">Forms a heterodimer, consisting of a large extracellular region non-covalently linked to a seven-transmembrane moiety.</text>
</comment>
<comment type="subcellular location">
    <subcellularLocation>
        <location evidence="3">Cell membrane</location>
        <topology evidence="2 3">Multi-pass membrane protein</topology>
    </subcellularLocation>
</comment>
<comment type="PTM">
    <text evidence="2">Proteolytically cleaved into 2 subunits, an extracellular subunit and a seven-transmembrane subunit.</text>
</comment>
<comment type="similarity">
    <text evidence="3">Belongs to the G-protein coupled receptor 2 family. LN-TM7 subfamily.</text>
</comment>
<name>LPHN_DROPS</name>
<keyword id="KW-1003">Cell membrane</keyword>
<keyword id="KW-1015">Disulfide bond</keyword>
<keyword id="KW-0297">G-protein coupled receptor</keyword>
<keyword id="KW-0325">Glycoprotein</keyword>
<keyword id="KW-0430">Lectin</keyword>
<keyword id="KW-0472">Membrane</keyword>
<keyword id="KW-0597">Phosphoprotein</keyword>
<keyword id="KW-0675">Receptor</keyword>
<keyword id="KW-1185">Reference proteome</keyword>
<keyword id="KW-0807">Transducer</keyword>
<keyword id="KW-0812">Transmembrane</keyword>
<keyword id="KW-1133">Transmembrane helix</keyword>
<gene>
    <name evidence="1" type="primary">Cirl</name>
    <name type="ORF">GA21229</name>
</gene>
<protein>
    <recommendedName>
        <fullName evidence="1">Latrophilin Cirl</fullName>
    </recommendedName>
</protein>
<organism>
    <name type="scientific">Drosophila pseudoobscura pseudoobscura</name>
    <name type="common">Fruit fly</name>
    <dbReference type="NCBI Taxonomy" id="46245"/>
    <lineage>
        <taxon>Eukaryota</taxon>
        <taxon>Metazoa</taxon>
        <taxon>Ecdysozoa</taxon>
        <taxon>Arthropoda</taxon>
        <taxon>Hexapoda</taxon>
        <taxon>Insecta</taxon>
        <taxon>Pterygota</taxon>
        <taxon>Neoptera</taxon>
        <taxon>Endopterygota</taxon>
        <taxon>Diptera</taxon>
        <taxon>Brachycera</taxon>
        <taxon>Muscomorpha</taxon>
        <taxon>Ephydroidea</taxon>
        <taxon>Drosophilidae</taxon>
        <taxon>Drosophila</taxon>
        <taxon>Sophophora</taxon>
    </lineage>
</organism>
<proteinExistence type="inferred from homology"/>
<sequence length="1693" mass="185677">MVLQGAKQRLCSSKNLDTCVLTPKYQTAYACEGKKLTIECEQGELINLIRANYGRFSITICNDHGNVEWSVNCMFPKSLTVLNSRCAHKNSCSVLAATSMFGDPCPGTHKYLEAHYQCVSAAQTSTTTNRPSPPPWVLNNGPPIFGNGSGLIHPTNIGGGSGGASAPPRLPTLPGVVGINGNGGMFNVPPPATHATPPGSTATLPGGRLKGVATSTTTTKHPAGRRDGLPPPPQLHHHHNHHTDETTPTKPSGKVPAASNATAPSNTRILTGVGGGGTDDGTLLTTKSSPNRTPGTAASGPSVSSNGSAVRTINNINLNAAGMAGADDETKLFCGPTHARNLFWNMTRVGDVNVQPCPGGAAGIAKWRCVLMKRMPDSSFDEDDEEMAGTSTTTPMSTSGDCLHNSSSCEPPVTMAHKVNQRLRNFEPTWHPLTPDLTQCRSLWLNNLEMRVNQRDSSLISIANDMSEVTSSKTLYGGDMLVTTKIIQTVSEKMLHDKETFPDQRQREAMIMELLHCVVKTGSNLLDESQLSSWLDLNPEDQMRVATSLLTGLEYNAFLLADTIIRERSVVQKVKNILLSVRVLETKTIQSSVVFPDSDQWPISSDRIELPRAALIENSEGGLVRIVFAAFDRLESILKPSYDHFDLKSSRSYVRNTAILTNDSDASAGDLQQRLRILNSKVISASLGKGRHIQLSQPITLTLKHLKTENVTNPTCVFWNYIDHAWSANGCSLESTNRTHSVCSCNHLTNFAILMDVVDEHQHSLFTMFDGNMRIFIYISIAICVVFIVIALLTLKLFNGVFVKSARTSIYINIYICLLAIELLFLLGIEQTETSIFCGFITVFLHCAILSGTSWFCYEAFHSYSTLTSDELLLEVDQTPKVNCYYLLSYGLSLSVVAISLVINPSTYTQNDYCVLMEANAVFYATFVAPVLIFFMAAIGYTFLSWIIMCRKSRTGLKTKEHTRLATVRFDIRCSFVFFLLLSAVWCSAYFYLRGAKMDEDVTGIYGYNFICFNTLLGLYIFVFHCIQNEKIRREYRKYVRQHAWLPKCLRCSKTSISSGIVAGGGTGLGGTNAGTLCSVSTAKKSKLPLGTNDDAHDEQQQQQHMSATEDAIMGASSDCELNEAQQRRTLKSGLITGTLQPSQSLGGHVVLERGNTLRSTGHASPTSSAGSTHLIFAHKQQQQQPPLGEAYYHQPDYYSWKQTAGGMKAQREYYNNAGAATSSPQQAHEVFYWTQKPNSQHGKKKRGGVGAIPASPSGSLHSRATAASQVLFYPSYKKTKPGQQAHPHYAEALDPPQPPNTAAYYQQQQQLRQQRQQQQQQLSSDEEQAEQHAHLLHLQHQQQQQQQRRAGGQQQLPAPPPHMAQYQQEFMQRQYRNKHSNCDLGDAYYNQGSVGGADGGPVYEEILSNRNSDAQHYEVGDFDVDEVYNNSVGTGVFNNMRAAVAAGGSRYGGSLSGGSVSSRNQQQQQHSLAQPISARRCTADEDDDEDEDDEETTAAEQLHDGVCDEEEEDEESDMEDDSHGLPPQSAERMRRLMALQDEDFKRRFQRQQRKHGAPVDYGTLPPGSAQAVIGGAHPEHNGAVFGVSGGVGEGSMRGALRQQHAKSPSARLAVNELFGHGNTGPPLPPANQTPAQKRQQLQKLSPQSTTSSSSHTSHSNPHSHPPHHQQRHLSAMLDENNTVRCYLEPLAK</sequence>
<evidence type="ECO:0000250" key="1">
    <source>
        <dbReference type="UniProtKB" id="A1Z7G7"/>
    </source>
</evidence>
<evidence type="ECO:0000250" key="2">
    <source>
        <dbReference type="UniProtKB" id="O88923"/>
    </source>
</evidence>
<evidence type="ECO:0000255" key="3"/>
<evidence type="ECO:0000255" key="4">
    <source>
        <dbReference type="PROSITE-ProRule" id="PRU00098"/>
    </source>
</evidence>
<evidence type="ECO:0000255" key="5">
    <source>
        <dbReference type="PROSITE-ProRule" id="PRU00260"/>
    </source>
</evidence>
<evidence type="ECO:0000256" key="6">
    <source>
        <dbReference type="SAM" id="MobiDB-lite"/>
    </source>
</evidence>
<evidence type="ECO:0000312" key="7">
    <source>
        <dbReference type="EMBL" id="EAL24828.2"/>
    </source>
</evidence>
<feature type="chain" id="PRO_0000393378" description="Latrophilin Cirl">
    <location>
        <begin position="1"/>
        <end position="1693"/>
    </location>
</feature>
<feature type="topological domain" description="Extracellular" evidence="3">
    <location>
        <begin position="1"/>
        <end position="774"/>
    </location>
</feature>
<feature type="transmembrane region" description="Helical; Name=1" evidence="3">
    <location>
        <begin position="775"/>
        <end position="795"/>
    </location>
</feature>
<feature type="topological domain" description="Cytoplasmic" evidence="3">
    <location>
        <begin position="796"/>
        <end position="808"/>
    </location>
</feature>
<feature type="transmembrane region" description="Helical; Name=2" evidence="3">
    <location>
        <begin position="809"/>
        <end position="829"/>
    </location>
</feature>
<feature type="topological domain" description="Extracellular" evidence="3">
    <location>
        <begin position="830"/>
        <end position="835"/>
    </location>
</feature>
<feature type="transmembrane region" description="Helical; Name=3" evidence="3">
    <location>
        <begin position="836"/>
        <end position="856"/>
    </location>
</feature>
<feature type="topological domain" description="Cytoplasmic" evidence="3">
    <location>
        <begin position="857"/>
        <end position="882"/>
    </location>
</feature>
<feature type="transmembrane region" description="Helical; Name=4" evidence="3">
    <location>
        <begin position="883"/>
        <end position="903"/>
    </location>
</feature>
<feature type="topological domain" description="Extracellular" evidence="3">
    <location>
        <begin position="904"/>
        <end position="927"/>
    </location>
</feature>
<feature type="transmembrane region" description="Helical; Name=5" evidence="3">
    <location>
        <begin position="928"/>
        <end position="948"/>
    </location>
</feature>
<feature type="topological domain" description="Cytoplasmic" evidence="3">
    <location>
        <begin position="949"/>
        <end position="975"/>
    </location>
</feature>
<feature type="transmembrane region" description="Helical; Name=6" evidence="3">
    <location>
        <begin position="976"/>
        <end position="996"/>
    </location>
</feature>
<feature type="topological domain" description="Extracellular" evidence="3">
    <location>
        <begin position="997"/>
        <end position="1003"/>
    </location>
</feature>
<feature type="transmembrane region" description="Helical; Name=7" evidence="3">
    <location>
        <begin position="1004"/>
        <end position="1024"/>
    </location>
</feature>
<feature type="topological domain" description="Cytoplasmic" evidence="3">
    <location>
        <begin position="1025"/>
        <end position="1693"/>
    </location>
</feature>
<feature type="domain" description="SUEL-type lectin" evidence="5">
    <location>
        <begin position="30"/>
        <end position="119"/>
    </location>
</feature>
<feature type="domain" description="GAIN-B" evidence="4">
    <location>
        <begin position="568"/>
        <end position="761"/>
    </location>
</feature>
<feature type="region of interest" description="Disordered" evidence="6">
    <location>
        <begin position="190"/>
        <end position="309"/>
    </location>
</feature>
<feature type="region of interest" description="Disordered" evidence="6">
    <location>
        <begin position="379"/>
        <end position="406"/>
    </location>
</feature>
<feature type="region of interest" description="GPS" evidence="4">
    <location>
        <begin position="716"/>
        <end position="761"/>
    </location>
</feature>
<feature type="region of interest" description="Disordered" evidence="6">
    <location>
        <begin position="1089"/>
        <end position="1109"/>
    </location>
</feature>
<feature type="region of interest" description="Disordered" evidence="6">
    <location>
        <begin position="1237"/>
        <end position="1264"/>
    </location>
</feature>
<feature type="region of interest" description="Disordered" evidence="6">
    <location>
        <begin position="1279"/>
        <end position="1362"/>
    </location>
</feature>
<feature type="region of interest" description="Disordered" evidence="6">
    <location>
        <begin position="1450"/>
        <end position="1529"/>
    </location>
</feature>
<feature type="region of interest" description="Disordered" evidence="6">
    <location>
        <begin position="1596"/>
        <end position="1678"/>
    </location>
</feature>
<feature type="compositionally biased region" description="Polar residues" evidence="6">
    <location>
        <begin position="259"/>
        <end position="269"/>
    </location>
</feature>
<feature type="compositionally biased region" description="Polar residues" evidence="6">
    <location>
        <begin position="287"/>
        <end position="309"/>
    </location>
</feature>
<feature type="compositionally biased region" description="Low complexity" evidence="6">
    <location>
        <begin position="390"/>
        <end position="399"/>
    </location>
</feature>
<feature type="compositionally biased region" description="Low complexity" evidence="6">
    <location>
        <begin position="1307"/>
        <end position="1323"/>
    </location>
</feature>
<feature type="compositionally biased region" description="Low complexity" evidence="6">
    <location>
        <begin position="1337"/>
        <end position="1357"/>
    </location>
</feature>
<feature type="compositionally biased region" description="Polar residues" evidence="6">
    <location>
        <begin position="1464"/>
        <end position="1475"/>
    </location>
</feature>
<feature type="compositionally biased region" description="Acidic residues" evidence="6">
    <location>
        <begin position="1485"/>
        <end position="1498"/>
    </location>
</feature>
<feature type="compositionally biased region" description="Acidic residues" evidence="6">
    <location>
        <begin position="1508"/>
        <end position="1521"/>
    </location>
</feature>
<feature type="compositionally biased region" description="Low complexity" evidence="6">
    <location>
        <begin position="1640"/>
        <end position="1663"/>
    </location>
</feature>
<feature type="site" description="Cleavage; by autolysis" evidence="4">
    <location>
        <begin position="748"/>
        <end position="749"/>
    </location>
</feature>
<feature type="modified residue" description="Phosphoserine" evidence="1">
    <location>
        <position position="1165"/>
    </location>
</feature>
<feature type="modified residue" description="Phosphoserine" evidence="1">
    <location>
        <position position="1256"/>
    </location>
</feature>
<feature type="modified residue" description="Phosphoserine" evidence="1">
    <location>
        <position position="1263"/>
    </location>
</feature>
<feature type="modified residue" description="Phosphoserine" evidence="1">
    <location>
        <position position="1324"/>
    </location>
</feature>
<feature type="modified residue" description="Phosphoserine" evidence="1">
    <location>
        <position position="1325"/>
    </location>
</feature>
<feature type="glycosylation site" description="N-linked (GlcNAc...) asparagine" evidence="3">
    <location>
        <position position="147"/>
    </location>
</feature>
<feature type="glycosylation site" description="N-linked (GlcNAc...) asparagine" evidence="3">
    <location>
        <position position="260"/>
    </location>
</feature>
<feature type="glycosylation site" description="N-linked (GlcNAc...) asparagine" evidence="3">
    <location>
        <position position="306"/>
    </location>
</feature>
<feature type="glycosylation site" description="N-linked (GlcNAc...) asparagine" evidence="3">
    <location>
        <position position="345"/>
    </location>
</feature>
<feature type="glycosylation site" description="N-linked (GlcNAc...) asparagine" evidence="3">
    <location>
        <position position="405"/>
    </location>
</feature>
<feature type="glycosylation site" description="N-linked (GlcNAc...) asparagine" evidence="3">
    <location>
        <position position="662"/>
    </location>
</feature>
<feature type="glycosylation site" description="N-linked (GlcNAc...) asparagine" evidence="3">
    <location>
        <position position="710"/>
    </location>
</feature>
<feature type="glycosylation site" description="N-linked (GlcNAc...) asparagine" evidence="3">
    <location>
        <position position="737"/>
    </location>
</feature>
<feature type="disulfide bond" evidence="4">
    <location>
        <begin position="716"/>
        <end position="743"/>
    </location>
</feature>
<feature type="disulfide bond" evidence="4">
    <location>
        <begin position="731"/>
        <end position="745"/>
    </location>
</feature>